<keyword id="KW-0965">Cell junction</keyword>
<keyword id="KW-1003">Cell membrane</keyword>
<keyword id="KW-0303">Gap junction</keyword>
<keyword id="KW-0407">Ion channel</keyword>
<keyword id="KW-0406">Ion transport</keyword>
<keyword id="KW-0472">Membrane</keyword>
<keyword id="KW-1185">Reference proteome</keyword>
<keyword id="KW-0812">Transmembrane</keyword>
<keyword id="KW-1133">Transmembrane helix</keyword>
<keyword id="KW-0813">Transport</keyword>
<protein>
    <recommendedName>
        <fullName>Innexin inx6</fullName>
        <shortName>Innexin-6</shortName>
    </recommendedName>
    <alternativeName>
        <fullName>Gap junction protein prp6</fullName>
    </alternativeName>
    <alternativeName>
        <fullName>Pas-related protein 6</fullName>
    </alternativeName>
</protein>
<name>INX6_DROME</name>
<feature type="chain" id="PRO_0000208502" description="Innexin inx6">
    <location>
        <begin position="1"/>
        <end position="481"/>
    </location>
</feature>
<feature type="topological domain" description="Cytoplasmic" evidence="2">
    <location>
        <begin position="1"/>
        <end position="21"/>
    </location>
</feature>
<feature type="transmembrane region" description="Helical" evidence="3">
    <location>
        <begin position="22"/>
        <end position="42"/>
    </location>
</feature>
<feature type="topological domain" description="Extracellular" evidence="2">
    <location>
        <begin position="43"/>
        <end position="144"/>
    </location>
</feature>
<feature type="transmembrane region" description="Helical" evidence="3">
    <location>
        <begin position="145"/>
        <end position="165"/>
    </location>
</feature>
<feature type="topological domain" description="Cytoplasmic" evidence="2">
    <location>
        <begin position="166"/>
        <end position="220"/>
    </location>
</feature>
<feature type="transmembrane region" description="Helical" evidence="3">
    <location>
        <begin position="221"/>
        <end position="241"/>
    </location>
</feature>
<feature type="topological domain" description="Extracellular" evidence="2">
    <location>
        <begin position="242"/>
        <end position="302"/>
    </location>
</feature>
<feature type="transmembrane region" description="Helical" evidence="3">
    <location>
        <begin position="303"/>
        <end position="323"/>
    </location>
</feature>
<feature type="topological domain" description="Cytoplasmic" evidence="2">
    <location>
        <begin position="324"/>
        <end position="481"/>
    </location>
</feature>
<feature type="sequence conflict" description="In Ref. 4; AAD50380." evidence="5" ref="4">
    <original>S</original>
    <variation>T</variation>
    <location>
        <position position="418"/>
    </location>
</feature>
<feature type="sequence conflict" description="In Ref. 4; AAD50380." evidence="5" ref="4">
    <original>S</original>
    <variation>R</variation>
    <location>
        <position position="431"/>
    </location>
</feature>
<proteinExistence type="evidence at transcript level"/>
<organism>
    <name type="scientific">Drosophila melanogaster</name>
    <name type="common">Fruit fly</name>
    <dbReference type="NCBI Taxonomy" id="7227"/>
    <lineage>
        <taxon>Eukaryota</taxon>
        <taxon>Metazoa</taxon>
        <taxon>Ecdysozoa</taxon>
        <taxon>Arthropoda</taxon>
        <taxon>Hexapoda</taxon>
        <taxon>Insecta</taxon>
        <taxon>Pterygota</taxon>
        <taxon>Neoptera</taxon>
        <taxon>Endopterygota</taxon>
        <taxon>Diptera</taxon>
        <taxon>Brachycera</taxon>
        <taxon>Muscomorpha</taxon>
        <taxon>Ephydroidea</taxon>
        <taxon>Drosophilidae</taxon>
        <taxon>Drosophila</taxon>
        <taxon>Sophophora</taxon>
    </lineage>
</organism>
<evidence type="ECO:0000250" key="1"/>
<evidence type="ECO:0000255" key="2"/>
<evidence type="ECO:0000255" key="3">
    <source>
        <dbReference type="PROSITE-ProRule" id="PRU00351"/>
    </source>
</evidence>
<evidence type="ECO:0000269" key="4">
    <source>
    </source>
</evidence>
<evidence type="ECO:0000305" key="5"/>
<gene>
    <name type="primary">Inx6</name>
    <name type="synonym">prp6</name>
    <name type="ORF">CG17063</name>
</gene>
<sequence>MYAAVKPLSNYLRLKTVRIYDPIFTLHSKCTIVILLTCTFLLSAKQYFGEPILCLSSERQADYVQSYCWTMGTYILPAEVDRDGGSSWEYALYAPTSTAAETFNVSSLRALVAQNEQYARFISIAEGVGPETRGVTKRMYLRYYQWVFMILLFQSLLFYFPSFLWKVWEGQRMEQLCCEVGDALIVEATYRTRLQMLTRYFRAQFAPIHWCYSIKYAFCELLNVFISILNFWLMDVVFNGFWYKYIHALAAIPVYDWNLWNLMTSRVFPKVAKCEMFVYGPSGTPNIMDILCVLPLNILNEKIFAVLYVWFLFIALLAIMNILYRLLVICCPELRLQLLRTHLNGMPKSHVREVLASAGYGDWFVLMCVSINVNPTLFRELLEQLYAKLNQARCTEPVFAEQPCQQVPQLAQVPQLFSHAKLDRCPSRNCSLLIDPTADRHSICTESSHRVTAMPTAPTLNLMAPNDEIISMDRFFHESHA</sequence>
<reference key="1">
    <citation type="journal article" date="2002" name="Mech. Dev.">
        <title>Gap junctions in Drosophila: developmental expression of the entire innexin gene family.</title>
        <authorList>
            <person name="Stebbings L.A."/>
            <person name="Todman M.G."/>
            <person name="Phillips R."/>
            <person name="Greer C.E."/>
            <person name="Tam J."/>
            <person name="Phelan P."/>
            <person name="Jacobs K."/>
            <person name="Bacon J.P."/>
            <person name="Davies J.A."/>
        </authorList>
    </citation>
    <scope>NUCLEOTIDE SEQUENCE [MRNA]</scope>
    <scope>TISSUE SPECIFICITY</scope>
    <scope>DEVELOPMENTAL STAGE</scope>
</reference>
<reference key="2">
    <citation type="journal article" date="2000" name="Science">
        <title>The genome sequence of Drosophila melanogaster.</title>
        <authorList>
            <person name="Adams M.D."/>
            <person name="Celniker S.E."/>
            <person name="Holt R.A."/>
            <person name="Evans C.A."/>
            <person name="Gocayne J.D."/>
            <person name="Amanatides P.G."/>
            <person name="Scherer S.E."/>
            <person name="Li P.W."/>
            <person name="Hoskins R.A."/>
            <person name="Galle R.F."/>
            <person name="George R.A."/>
            <person name="Lewis S.E."/>
            <person name="Richards S."/>
            <person name="Ashburner M."/>
            <person name="Henderson S.N."/>
            <person name="Sutton G.G."/>
            <person name="Wortman J.R."/>
            <person name="Yandell M.D."/>
            <person name="Zhang Q."/>
            <person name="Chen L.X."/>
            <person name="Brandon R.C."/>
            <person name="Rogers Y.-H.C."/>
            <person name="Blazej R.G."/>
            <person name="Champe M."/>
            <person name="Pfeiffer B.D."/>
            <person name="Wan K.H."/>
            <person name="Doyle C."/>
            <person name="Baxter E.G."/>
            <person name="Helt G."/>
            <person name="Nelson C.R."/>
            <person name="Miklos G.L.G."/>
            <person name="Abril J.F."/>
            <person name="Agbayani A."/>
            <person name="An H.-J."/>
            <person name="Andrews-Pfannkoch C."/>
            <person name="Baldwin D."/>
            <person name="Ballew R.M."/>
            <person name="Basu A."/>
            <person name="Baxendale J."/>
            <person name="Bayraktaroglu L."/>
            <person name="Beasley E.M."/>
            <person name="Beeson K.Y."/>
            <person name="Benos P.V."/>
            <person name="Berman B.P."/>
            <person name="Bhandari D."/>
            <person name="Bolshakov S."/>
            <person name="Borkova D."/>
            <person name="Botchan M.R."/>
            <person name="Bouck J."/>
            <person name="Brokstein P."/>
            <person name="Brottier P."/>
            <person name="Burtis K.C."/>
            <person name="Busam D.A."/>
            <person name="Butler H."/>
            <person name="Cadieu E."/>
            <person name="Center A."/>
            <person name="Chandra I."/>
            <person name="Cherry J.M."/>
            <person name="Cawley S."/>
            <person name="Dahlke C."/>
            <person name="Davenport L.B."/>
            <person name="Davies P."/>
            <person name="de Pablos B."/>
            <person name="Delcher A."/>
            <person name="Deng Z."/>
            <person name="Mays A.D."/>
            <person name="Dew I."/>
            <person name="Dietz S.M."/>
            <person name="Dodson K."/>
            <person name="Doup L.E."/>
            <person name="Downes M."/>
            <person name="Dugan-Rocha S."/>
            <person name="Dunkov B.C."/>
            <person name="Dunn P."/>
            <person name="Durbin K.J."/>
            <person name="Evangelista C.C."/>
            <person name="Ferraz C."/>
            <person name="Ferriera S."/>
            <person name="Fleischmann W."/>
            <person name="Fosler C."/>
            <person name="Gabrielian A.E."/>
            <person name="Garg N.S."/>
            <person name="Gelbart W.M."/>
            <person name="Glasser K."/>
            <person name="Glodek A."/>
            <person name="Gong F."/>
            <person name="Gorrell J.H."/>
            <person name="Gu Z."/>
            <person name="Guan P."/>
            <person name="Harris M."/>
            <person name="Harris N.L."/>
            <person name="Harvey D.A."/>
            <person name="Heiman T.J."/>
            <person name="Hernandez J.R."/>
            <person name="Houck J."/>
            <person name="Hostin D."/>
            <person name="Houston K.A."/>
            <person name="Howland T.J."/>
            <person name="Wei M.-H."/>
            <person name="Ibegwam C."/>
            <person name="Jalali M."/>
            <person name="Kalush F."/>
            <person name="Karpen G.H."/>
            <person name="Ke Z."/>
            <person name="Kennison J.A."/>
            <person name="Ketchum K.A."/>
            <person name="Kimmel B.E."/>
            <person name="Kodira C.D."/>
            <person name="Kraft C.L."/>
            <person name="Kravitz S."/>
            <person name="Kulp D."/>
            <person name="Lai Z."/>
            <person name="Lasko P."/>
            <person name="Lei Y."/>
            <person name="Levitsky A.A."/>
            <person name="Li J.H."/>
            <person name="Li Z."/>
            <person name="Liang Y."/>
            <person name="Lin X."/>
            <person name="Liu X."/>
            <person name="Mattei B."/>
            <person name="McIntosh T.C."/>
            <person name="McLeod M.P."/>
            <person name="McPherson D."/>
            <person name="Merkulov G."/>
            <person name="Milshina N.V."/>
            <person name="Mobarry C."/>
            <person name="Morris J."/>
            <person name="Moshrefi A."/>
            <person name="Mount S.M."/>
            <person name="Moy M."/>
            <person name="Murphy B."/>
            <person name="Murphy L."/>
            <person name="Muzny D.M."/>
            <person name="Nelson D.L."/>
            <person name="Nelson D.R."/>
            <person name="Nelson K.A."/>
            <person name="Nixon K."/>
            <person name="Nusskern D.R."/>
            <person name="Pacleb J.M."/>
            <person name="Palazzolo M."/>
            <person name="Pittman G.S."/>
            <person name="Pan S."/>
            <person name="Pollard J."/>
            <person name="Puri V."/>
            <person name="Reese M.G."/>
            <person name="Reinert K."/>
            <person name="Remington K."/>
            <person name="Saunders R.D.C."/>
            <person name="Scheeler F."/>
            <person name="Shen H."/>
            <person name="Shue B.C."/>
            <person name="Siden-Kiamos I."/>
            <person name="Simpson M."/>
            <person name="Skupski M.P."/>
            <person name="Smith T.J."/>
            <person name="Spier E."/>
            <person name="Spradling A.C."/>
            <person name="Stapleton M."/>
            <person name="Strong R."/>
            <person name="Sun E."/>
            <person name="Svirskas R."/>
            <person name="Tector C."/>
            <person name="Turner R."/>
            <person name="Venter E."/>
            <person name="Wang A.H."/>
            <person name="Wang X."/>
            <person name="Wang Z.-Y."/>
            <person name="Wassarman D.A."/>
            <person name="Weinstock G.M."/>
            <person name="Weissenbach J."/>
            <person name="Williams S.M."/>
            <person name="Woodage T."/>
            <person name="Worley K.C."/>
            <person name="Wu D."/>
            <person name="Yang S."/>
            <person name="Yao Q.A."/>
            <person name="Ye J."/>
            <person name="Yeh R.-F."/>
            <person name="Zaveri J.S."/>
            <person name="Zhan M."/>
            <person name="Zhang G."/>
            <person name="Zhao Q."/>
            <person name="Zheng L."/>
            <person name="Zheng X.H."/>
            <person name="Zhong F.N."/>
            <person name="Zhong W."/>
            <person name="Zhou X."/>
            <person name="Zhu S.C."/>
            <person name="Zhu X."/>
            <person name="Smith H.O."/>
            <person name="Gibbs R.A."/>
            <person name="Myers E.W."/>
            <person name="Rubin G.M."/>
            <person name="Venter J.C."/>
        </authorList>
    </citation>
    <scope>NUCLEOTIDE SEQUENCE [LARGE SCALE GENOMIC DNA]</scope>
    <source>
        <strain>Berkeley</strain>
    </source>
</reference>
<reference key="3">
    <citation type="journal article" date="2002" name="Genome Biol.">
        <title>Annotation of the Drosophila melanogaster euchromatic genome: a systematic review.</title>
        <authorList>
            <person name="Misra S."/>
            <person name="Crosby M.A."/>
            <person name="Mungall C.J."/>
            <person name="Matthews B.B."/>
            <person name="Campbell K.S."/>
            <person name="Hradecky P."/>
            <person name="Huang Y."/>
            <person name="Kaminker J.S."/>
            <person name="Millburn G.H."/>
            <person name="Prochnik S.E."/>
            <person name="Smith C.D."/>
            <person name="Tupy J.L."/>
            <person name="Whitfield E.J."/>
            <person name="Bayraktaroglu L."/>
            <person name="Berman B.P."/>
            <person name="Bettencourt B.R."/>
            <person name="Celniker S.E."/>
            <person name="de Grey A.D.N.J."/>
            <person name="Drysdale R.A."/>
            <person name="Harris N.L."/>
            <person name="Richter J."/>
            <person name="Russo S."/>
            <person name="Schroeder A.J."/>
            <person name="Shu S.Q."/>
            <person name="Stapleton M."/>
            <person name="Yamada C."/>
            <person name="Ashburner M."/>
            <person name="Gelbart W.M."/>
            <person name="Rubin G.M."/>
            <person name="Lewis S.E."/>
        </authorList>
    </citation>
    <scope>GENOME REANNOTATION</scope>
    <source>
        <strain>Berkeley</strain>
    </source>
</reference>
<reference key="4">
    <citation type="journal article" date="1999" name="Gene">
        <title>Drosophila has several genes for gap junction proteins.</title>
        <authorList>
            <person name="Curtin K.D."/>
            <person name="Zhang Z."/>
            <person name="Wyman R.J."/>
        </authorList>
    </citation>
    <scope>NUCLEOTIDE SEQUENCE [MRNA] OF 228-431</scope>
    <source>
        <tissue>Head</tissue>
    </source>
</reference>
<comment type="function">
    <text evidence="1">Structural components of the gap junctions.</text>
</comment>
<comment type="subcellular location">
    <subcellularLocation>
        <location evidence="5">Cell membrane</location>
        <topology evidence="3">Multi-pass membrane protein</topology>
    </subcellularLocation>
    <subcellularLocation>
        <location evidence="1">Cell junction</location>
        <location evidence="1">Gap junction</location>
    </subcellularLocation>
</comment>
<comment type="tissue specificity">
    <text evidence="4">Uniform expression in the imaginal wing disk. Expressed in an outer layer of the pupal developing CNS. Also expressed in pupal retina: cone cells and primary pigment cells.</text>
</comment>
<comment type="developmental stage">
    <text evidence="4">Not expressed in embryos. Expressed in larvae and pupae.</text>
</comment>
<comment type="similarity">
    <text evidence="3">Belongs to the pannexin family.</text>
</comment>
<comment type="sequence caution" evidence="5">
    <conflict type="frameshift">
        <sequence resource="EMBL-CDS" id="AAD50380"/>
    </conflict>
</comment>
<dbReference type="EMBL" id="AY057373">
    <property type="protein sequence ID" value="AAL25821.1"/>
    <property type="molecule type" value="mRNA"/>
</dbReference>
<dbReference type="EMBL" id="AE014298">
    <property type="protein sequence ID" value="AAF50922.1"/>
    <property type="molecule type" value="Genomic_DNA"/>
</dbReference>
<dbReference type="EMBL" id="AF137271">
    <property type="protein sequence ID" value="AAD50380.1"/>
    <property type="status" value="ALT_FRAME"/>
    <property type="molecule type" value="mRNA"/>
</dbReference>
<dbReference type="RefSeq" id="NP_572374.1">
    <property type="nucleotide sequence ID" value="NM_132146.2"/>
</dbReference>
<dbReference type="FunCoup" id="Q9VR82">
    <property type="interactions" value="5"/>
</dbReference>
<dbReference type="STRING" id="7227.FBpp0077031"/>
<dbReference type="PaxDb" id="7227-FBpp0077031"/>
<dbReference type="EnsemblMetazoa" id="FBtr0077339">
    <property type="protein sequence ID" value="FBpp0077031"/>
    <property type="gene ID" value="FBgn0027107"/>
</dbReference>
<dbReference type="GeneID" id="31645"/>
<dbReference type="KEGG" id="dme:Dmel_CG17063"/>
<dbReference type="AGR" id="FB:FBgn0027107"/>
<dbReference type="CTD" id="31645"/>
<dbReference type="FlyBase" id="FBgn0027107">
    <property type="gene designation" value="Inx6"/>
</dbReference>
<dbReference type="VEuPathDB" id="VectorBase:FBgn0027107"/>
<dbReference type="eggNOG" id="ENOG502QR27">
    <property type="taxonomic scope" value="Eukaryota"/>
</dbReference>
<dbReference type="GeneTree" id="ENSGT00530000064205"/>
<dbReference type="HOGENOM" id="CLU_035763_1_1_1"/>
<dbReference type="InParanoid" id="Q9VR82"/>
<dbReference type="OMA" id="NFWLMDV"/>
<dbReference type="OrthoDB" id="5867527at2759"/>
<dbReference type="PhylomeDB" id="Q9VR82"/>
<dbReference type="BioGRID-ORCS" id="31645">
    <property type="hits" value="0 hits in 1 CRISPR screen"/>
</dbReference>
<dbReference type="GenomeRNAi" id="31645"/>
<dbReference type="PRO" id="PR:Q9VR82"/>
<dbReference type="Proteomes" id="UP000000803">
    <property type="component" value="Chromosome X"/>
</dbReference>
<dbReference type="Bgee" id="FBgn0027107">
    <property type="expression patterns" value="Expressed in early-mid elongation-stage spermatid (Drosophila) in testis and 2 other cell types or tissues"/>
</dbReference>
<dbReference type="GO" id="GO:0005921">
    <property type="term" value="C:gap junction"/>
    <property type="evidence" value="ECO:0000314"/>
    <property type="project" value="UniProtKB"/>
</dbReference>
<dbReference type="GO" id="GO:0016020">
    <property type="term" value="C:membrane"/>
    <property type="evidence" value="ECO:0000303"/>
    <property type="project" value="UniProtKB"/>
</dbReference>
<dbReference type="GO" id="GO:0005886">
    <property type="term" value="C:plasma membrane"/>
    <property type="evidence" value="ECO:0000318"/>
    <property type="project" value="GO_Central"/>
</dbReference>
<dbReference type="GO" id="GO:0005243">
    <property type="term" value="F:gap junction channel activity"/>
    <property type="evidence" value="ECO:0000318"/>
    <property type="project" value="GO_Central"/>
</dbReference>
<dbReference type="GO" id="GO:0010496">
    <property type="term" value="P:intercellular transport"/>
    <property type="evidence" value="ECO:0000250"/>
    <property type="project" value="FlyBase"/>
</dbReference>
<dbReference type="GO" id="GO:0072375">
    <property type="term" value="P:medium-term memory"/>
    <property type="evidence" value="ECO:0000315"/>
    <property type="project" value="FlyBase"/>
</dbReference>
<dbReference type="GO" id="GO:0034220">
    <property type="term" value="P:monoatomic ion transmembrane transport"/>
    <property type="evidence" value="ECO:0007669"/>
    <property type="project" value="UniProtKB-KW"/>
</dbReference>
<dbReference type="GO" id="GO:0007602">
    <property type="term" value="P:phototransduction"/>
    <property type="evidence" value="ECO:0000318"/>
    <property type="project" value="GO_Central"/>
</dbReference>
<dbReference type="InterPro" id="IPR000990">
    <property type="entry name" value="Innexin"/>
</dbReference>
<dbReference type="PANTHER" id="PTHR11893">
    <property type="entry name" value="INNEXIN"/>
    <property type="match status" value="1"/>
</dbReference>
<dbReference type="PANTHER" id="PTHR11893:SF43">
    <property type="entry name" value="INNEXIN INX4-RELATED"/>
    <property type="match status" value="1"/>
</dbReference>
<dbReference type="Pfam" id="PF00876">
    <property type="entry name" value="Innexin"/>
    <property type="match status" value="1"/>
</dbReference>
<dbReference type="PRINTS" id="PR01262">
    <property type="entry name" value="INNEXIN"/>
</dbReference>
<dbReference type="PROSITE" id="PS51013">
    <property type="entry name" value="PANNEXIN"/>
    <property type="match status" value="1"/>
</dbReference>
<accession>Q9VR82</accession>
<accession>Q9UA15</accession>